<feature type="chain" id="PRO_0000219708" description="Photosystem II reaction center protein L">
    <location>
        <begin position="1"/>
        <end position="38"/>
    </location>
</feature>
<feature type="transmembrane region" description="Helical" evidence="1">
    <location>
        <begin position="17"/>
        <end position="37"/>
    </location>
</feature>
<reference key="1">
    <citation type="journal article" date="1988" name="Photosyn. Res.">
        <title>Nucleotide sequence of the genes encoding cytochrome b-559 from the cyanelle genome of Cyanophora paradoxa.</title>
        <authorList>
            <person name="Cantrell A."/>
            <person name="Bryant D.A."/>
        </authorList>
    </citation>
    <scope>NUCLEOTIDE SEQUENCE [GENOMIC DNA]</scope>
    <source>
        <strain>UTEX LB 555 / Pringsheim</strain>
    </source>
</reference>
<reference key="2">
    <citation type="journal article" date="1987" name="Prog. Photosyn. Res.">
        <title>Molecular cloning and nucleotide sequences of the genes encoding cytochrome B-559 from the cyanelle genome of Cyanophora paradoxa.</title>
        <authorList>
            <person name="Cantrell A."/>
            <person name="Bryant D.A."/>
        </authorList>
    </citation>
    <scope>NUCLEOTIDE SEQUENCE [GENOMIC DNA]</scope>
    <source>
        <strain>UTEX LB 555 / Pringsheim</strain>
    </source>
</reference>
<reference key="3">
    <citation type="journal article" date="1995" name="Plant Mol. Biol. Rep.">
        <title>Nucleotide sequence of the cyanelle DNA from Cyanophora paradoxa.</title>
        <authorList>
            <person name="Stirewalt V.L."/>
            <person name="Michalowski C.B."/>
            <person name="Loeffelhardt W."/>
            <person name="Bohnert H.J."/>
            <person name="Bryant D.A."/>
        </authorList>
    </citation>
    <scope>NUCLEOTIDE SEQUENCE [LARGE SCALE GENOMIC DNA]</scope>
    <source>
        <strain>UTEX LB 555 / Pringsheim</strain>
    </source>
</reference>
<reference key="4">
    <citation type="book" date="1997" name="Eukaryotism and symbiosis">
        <title>The complete sequence of the cyanelle genome of Cyanophora paradoxa: the genetic complexity of a primitive plastid.</title>
        <editorList>
            <person name="Schenk H.E.A."/>
            <person name="Herrmann R."/>
            <person name="Jeon K.W."/>
            <person name="Mueller N.E."/>
            <person name="Schwemmler W."/>
        </editorList>
        <authorList>
            <person name="Loeffelhardt W."/>
            <person name="Stirewalt V.L."/>
            <person name="Michalowski C.B."/>
            <person name="Annarella M."/>
            <person name="Farley J.Y."/>
            <person name="Schluchter W.M."/>
            <person name="Chung S."/>
            <person name="Newmann-Spallart C."/>
            <person name="Steiner J.M."/>
            <person name="Jakowitsch J."/>
            <person name="Bohnert H.J."/>
            <person name="Bryant D.A."/>
        </authorList>
    </citation>
    <scope>NUCLEOTIDE SEQUENCE [LARGE SCALE GENOMIC DNA]</scope>
    <source>
        <strain>UTEX LB 555 / Pringsheim</strain>
    </source>
</reference>
<sequence>MVSQNPNRQKVELNRTSLFWGLLLIFVLAILFSSYIFN</sequence>
<proteinExistence type="inferred from homology"/>
<comment type="function">
    <text evidence="1">One of the components of the core complex of photosystem II (PSII). PSII is a light-driven water:plastoquinone oxidoreductase that uses light energy to abstract electrons from H(2)O, generating O(2) and a proton gradient subsequently used for ATP formation. It consists of a core antenna complex that captures photons, and an electron transfer chain that converts photonic excitation into a charge separation. This subunit is found at the monomer-monomer interface and is required for correct PSII assembly and/or dimerization.</text>
</comment>
<comment type="subunit">
    <text evidence="1">PSII is composed of 1 copy each of membrane proteins PsbA, PsbB, PsbC, PsbD, PsbE, PsbF, PsbH, PsbI, PsbJ, PsbK, PsbL, PsbM, PsbT, PsbX, PsbY, PsbZ, Psb30/Ycf12, at least 3 peripheral proteins of the oxygen-evolving complex and a large number of cofactors. It forms dimeric complexes.</text>
</comment>
<comment type="subcellular location">
    <subcellularLocation>
        <location evidence="1">Plastid</location>
        <location evidence="1">Cyanelle thylakoid membrane</location>
        <topology evidence="1">Single-pass membrane protein</topology>
    </subcellularLocation>
</comment>
<comment type="similarity">
    <text evidence="1">Belongs to the PsbL family.</text>
</comment>
<evidence type="ECO:0000255" key="1">
    <source>
        <dbReference type="HAMAP-Rule" id="MF_01317"/>
    </source>
</evidence>
<accession>P19154</accession>
<organism>
    <name type="scientific">Cyanophora paradoxa</name>
    <dbReference type="NCBI Taxonomy" id="2762"/>
    <lineage>
        <taxon>Eukaryota</taxon>
        <taxon>Glaucocystophyceae</taxon>
        <taxon>Cyanophoraceae</taxon>
        <taxon>Cyanophora</taxon>
    </lineage>
</organism>
<protein>
    <recommendedName>
        <fullName evidence="1">Photosystem II reaction center protein L</fullName>
        <shortName evidence="1">PSII-L</shortName>
    </recommendedName>
</protein>
<dbReference type="EMBL" id="M35129">
    <property type="protein sequence ID" value="AAA31697.1"/>
    <property type="molecule type" value="Genomic_DNA"/>
</dbReference>
<dbReference type="EMBL" id="U30821">
    <property type="protein sequence ID" value="AAA81211.1"/>
    <property type="molecule type" value="Genomic_DNA"/>
</dbReference>
<dbReference type="PIR" id="S09483">
    <property type="entry name" value="F2KTL"/>
</dbReference>
<dbReference type="RefSeq" id="NP_043180.1">
    <property type="nucleotide sequence ID" value="NC_001675.1"/>
</dbReference>
<dbReference type="SMR" id="P19154"/>
<dbReference type="GeneID" id="801503"/>
<dbReference type="GO" id="GO:0033115">
    <property type="term" value="C:cyanelle thylakoid membrane"/>
    <property type="evidence" value="ECO:0007669"/>
    <property type="project" value="UniProtKB-SubCell"/>
</dbReference>
<dbReference type="GO" id="GO:0009539">
    <property type="term" value="C:photosystem II reaction center"/>
    <property type="evidence" value="ECO:0007669"/>
    <property type="project" value="InterPro"/>
</dbReference>
<dbReference type="GO" id="GO:0015979">
    <property type="term" value="P:photosynthesis"/>
    <property type="evidence" value="ECO:0007669"/>
    <property type="project" value="UniProtKB-UniRule"/>
</dbReference>
<dbReference type="HAMAP" id="MF_01317">
    <property type="entry name" value="PSII_PsbL"/>
    <property type="match status" value="1"/>
</dbReference>
<dbReference type="InterPro" id="IPR003372">
    <property type="entry name" value="PSII_PsbL"/>
</dbReference>
<dbReference type="InterPro" id="IPR037266">
    <property type="entry name" value="PSII_PsbL_sf"/>
</dbReference>
<dbReference type="NCBIfam" id="NF001972">
    <property type="entry name" value="PRK00753.1"/>
    <property type="match status" value="1"/>
</dbReference>
<dbReference type="Pfam" id="PF02419">
    <property type="entry name" value="PsbL"/>
    <property type="match status" value="1"/>
</dbReference>
<dbReference type="SUPFAM" id="SSF161017">
    <property type="entry name" value="Photosystem II reaction center protein L, PsbL"/>
    <property type="match status" value="1"/>
</dbReference>
<name>PSBL_CYAPA</name>
<keyword id="KW-0194">Cyanelle</keyword>
<keyword id="KW-0472">Membrane</keyword>
<keyword id="KW-0602">Photosynthesis</keyword>
<keyword id="KW-0604">Photosystem II</keyword>
<keyword id="KW-0934">Plastid</keyword>
<keyword id="KW-0674">Reaction center</keyword>
<keyword id="KW-0793">Thylakoid</keyword>
<keyword id="KW-0812">Transmembrane</keyword>
<keyword id="KW-1133">Transmembrane helix</keyword>
<gene>
    <name evidence="1" type="primary">psbL</name>
</gene>
<geneLocation type="cyanelle"/>